<protein>
    <recommendedName>
        <fullName evidence="1">Large ribosomal subunit protein bL25</fullName>
    </recommendedName>
    <alternativeName>
        <fullName evidence="2">50S ribosomal protein L25</fullName>
    </alternativeName>
    <alternativeName>
        <fullName evidence="1">General stress protein CTC</fullName>
    </alternativeName>
</protein>
<feature type="chain" id="PRO_1000052924" description="Large ribosomal subunit protein bL25">
    <location>
        <begin position="1"/>
        <end position="203"/>
    </location>
</feature>
<reference key="1">
    <citation type="journal article" date="2010" name="PLoS ONE">
        <title>The complete genome sequence of Cupriavidus metallidurans strain CH34, a master survivalist in harsh and anthropogenic environments.</title>
        <authorList>
            <person name="Janssen P.J."/>
            <person name="Van Houdt R."/>
            <person name="Moors H."/>
            <person name="Monsieurs P."/>
            <person name="Morin N."/>
            <person name="Michaux A."/>
            <person name="Benotmane M.A."/>
            <person name="Leys N."/>
            <person name="Vallaeys T."/>
            <person name="Lapidus A."/>
            <person name="Monchy S."/>
            <person name="Medigue C."/>
            <person name="Taghavi S."/>
            <person name="McCorkle S."/>
            <person name="Dunn J."/>
            <person name="van der Lelie D."/>
            <person name="Mergeay M."/>
        </authorList>
    </citation>
    <scope>NUCLEOTIDE SEQUENCE [LARGE SCALE GENOMIC DNA]</scope>
    <source>
        <strain>ATCC 43123 / DSM 2839 / NBRC 102507 / CH34</strain>
    </source>
</reference>
<keyword id="KW-1185">Reference proteome</keyword>
<keyword id="KW-0687">Ribonucleoprotein</keyword>
<keyword id="KW-0689">Ribosomal protein</keyword>
<keyword id="KW-0694">RNA-binding</keyword>
<keyword id="KW-0699">rRNA-binding</keyword>
<gene>
    <name evidence="1" type="primary">rplY</name>
    <name evidence="1" type="synonym">ctc</name>
    <name type="ordered locus">Rmet_0288</name>
</gene>
<comment type="function">
    <text evidence="1">This is one of the proteins that binds to the 5S RNA in the ribosome where it forms part of the central protuberance.</text>
</comment>
<comment type="subunit">
    <text evidence="1">Part of the 50S ribosomal subunit; part of the 5S rRNA/L5/L18/L25 subcomplex. Contacts the 5S rRNA. Binds to the 5S rRNA independently of L5 and L18.</text>
</comment>
<comment type="similarity">
    <text evidence="1">Belongs to the bacterial ribosomal protein bL25 family. CTC subfamily.</text>
</comment>
<organism>
    <name type="scientific">Cupriavidus metallidurans (strain ATCC 43123 / DSM 2839 / NBRC 102507 / CH34)</name>
    <name type="common">Ralstonia metallidurans</name>
    <dbReference type="NCBI Taxonomy" id="266264"/>
    <lineage>
        <taxon>Bacteria</taxon>
        <taxon>Pseudomonadati</taxon>
        <taxon>Pseudomonadota</taxon>
        <taxon>Betaproteobacteria</taxon>
        <taxon>Burkholderiales</taxon>
        <taxon>Burkholderiaceae</taxon>
        <taxon>Cupriavidus</taxon>
    </lineage>
</organism>
<proteinExistence type="inferred from homology"/>
<accession>Q1LRQ2</accession>
<sequence>MKVVAFERSVQGTGASRRLRNSGKTPGIIYGGAAEPKMIELDHNALWHALKKEAFHSSILDLEVAGKSEKALLRAFQMHPFKPLVLHVDFQRVSATEKIHVKVPLHFMNQETAPGVKLGHGIVSHILNDLEVSCLPADLPEFIEVDLAAAELNQTIHLSDLKLPKGVTAITHGDENPAIASITLPAGAQSSEAAEGGEETPAA</sequence>
<name>RL25_CUPMC</name>
<evidence type="ECO:0000255" key="1">
    <source>
        <dbReference type="HAMAP-Rule" id="MF_01334"/>
    </source>
</evidence>
<evidence type="ECO:0000305" key="2"/>
<dbReference type="EMBL" id="CP000352">
    <property type="protein sequence ID" value="ABF07174.1"/>
    <property type="molecule type" value="Genomic_DNA"/>
</dbReference>
<dbReference type="RefSeq" id="WP_011515177.1">
    <property type="nucleotide sequence ID" value="NC_007973.1"/>
</dbReference>
<dbReference type="SMR" id="Q1LRQ2"/>
<dbReference type="STRING" id="266264.Rmet_0288"/>
<dbReference type="KEGG" id="rme:Rmet_0288"/>
<dbReference type="eggNOG" id="COG1825">
    <property type="taxonomic scope" value="Bacteria"/>
</dbReference>
<dbReference type="HOGENOM" id="CLU_075939_0_1_4"/>
<dbReference type="Proteomes" id="UP000002429">
    <property type="component" value="Chromosome"/>
</dbReference>
<dbReference type="GO" id="GO:0022625">
    <property type="term" value="C:cytosolic large ribosomal subunit"/>
    <property type="evidence" value="ECO:0007669"/>
    <property type="project" value="TreeGrafter"/>
</dbReference>
<dbReference type="GO" id="GO:0008097">
    <property type="term" value="F:5S rRNA binding"/>
    <property type="evidence" value="ECO:0007669"/>
    <property type="project" value="InterPro"/>
</dbReference>
<dbReference type="GO" id="GO:0003735">
    <property type="term" value="F:structural constituent of ribosome"/>
    <property type="evidence" value="ECO:0007669"/>
    <property type="project" value="InterPro"/>
</dbReference>
<dbReference type="GO" id="GO:0006412">
    <property type="term" value="P:translation"/>
    <property type="evidence" value="ECO:0007669"/>
    <property type="project" value="UniProtKB-UniRule"/>
</dbReference>
<dbReference type="CDD" id="cd00495">
    <property type="entry name" value="Ribosomal_L25_TL5_CTC"/>
    <property type="match status" value="1"/>
</dbReference>
<dbReference type="Gene3D" id="2.170.120.20">
    <property type="entry name" value="Ribosomal protein L25, beta domain"/>
    <property type="match status" value="1"/>
</dbReference>
<dbReference type="Gene3D" id="2.40.240.10">
    <property type="entry name" value="Ribosomal Protein L25, Chain P"/>
    <property type="match status" value="1"/>
</dbReference>
<dbReference type="HAMAP" id="MF_01336">
    <property type="entry name" value="Ribosomal_bL25"/>
    <property type="match status" value="1"/>
</dbReference>
<dbReference type="HAMAP" id="MF_01334">
    <property type="entry name" value="Ribosomal_bL25_CTC"/>
    <property type="match status" value="1"/>
</dbReference>
<dbReference type="InterPro" id="IPR020056">
    <property type="entry name" value="Rbsml_bL25/Gln-tRNA_synth_N"/>
</dbReference>
<dbReference type="InterPro" id="IPR011035">
    <property type="entry name" value="Ribosomal_bL25/Gln-tRNA_synth"/>
</dbReference>
<dbReference type="InterPro" id="IPR020057">
    <property type="entry name" value="Ribosomal_bL25_b-dom"/>
</dbReference>
<dbReference type="InterPro" id="IPR037121">
    <property type="entry name" value="Ribosomal_bL25_C"/>
</dbReference>
<dbReference type="InterPro" id="IPR001021">
    <property type="entry name" value="Ribosomal_bL25_long"/>
</dbReference>
<dbReference type="InterPro" id="IPR020055">
    <property type="entry name" value="Ribosomal_bL25_short"/>
</dbReference>
<dbReference type="InterPro" id="IPR029751">
    <property type="entry name" value="Ribosomal_L25_dom"/>
</dbReference>
<dbReference type="InterPro" id="IPR020930">
    <property type="entry name" value="Ribosomal_uL5_bac-type"/>
</dbReference>
<dbReference type="NCBIfam" id="TIGR00731">
    <property type="entry name" value="bL25_bact_ctc"/>
    <property type="match status" value="1"/>
</dbReference>
<dbReference type="NCBIfam" id="NF004128">
    <property type="entry name" value="PRK05618.1-2"/>
    <property type="match status" value="1"/>
</dbReference>
<dbReference type="NCBIfam" id="NF004130">
    <property type="entry name" value="PRK05618.1-5"/>
    <property type="match status" value="1"/>
</dbReference>
<dbReference type="NCBIfam" id="NF004612">
    <property type="entry name" value="PRK05943.1"/>
    <property type="match status" value="1"/>
</dbReference>
<dbReference type="PANTHER" id="PTHR33284">
    <property type="entry name" value="RIBOSOMAL PROTEIN L25/GLN-TRNA SYNTHETASE, ANTI-CODON-BINDING DOMAIN-CONTAINING PROTEIN"/>
    <property type="match status" value="1"/>
</dbReference>
<dbReference type="PANTHER" id="PTHR33284:SF1">
    <property type="entry name" value="RIBOSOMAL PROTEIN L25_GLN-TRNA SYNTHETASE, ANTI-CODON-BINDING DOMAIN-CONTAINING PROTEIN"/>
    <property type="match status" value="1"/>
</dbReference>
<dbReference type="Pfam" id="PF01386">
    <property type="entry name" value="Ribosomal_L25p"/>
    <property type="match status" value="1"/>
</dbReference>
<dbReference type="Pfam" id="PF14693">
    <property type="entry name" value="Ribosomal_TL5_C"/>
    <property type="match status" value="1"/>
</dbReference>
<dbReference type="SUPFAM" id="SSF50715">
    <property type="entry name" value="Ribosomal protein L25-like"/>
    <property type="match status" value="1"/>
</dbReference>